<evidence type="ECO:0000255" key="1">
    <source>
        <dbReference type="HAMAP-Rule" id="MF_00255"/>
    </source>
</evidence>
<reference key="1">
    <citation type="submission" date="2005-11" db="EMBL/GenBank/DDBJ databases">
        <title>The complete genome sequence of Lawsonia intracellularis: the causative agent of proliferative enteropathy.</title>
        <authorList>
            <person name="Kaur K."/>
            <person name="Zhang Q."/>
            <person name="Beckler D."/>
            <person name="Munir S."/>
            <person name="Li L."/>
            <person name="Kinsley K."/>
            <person name="Herron L."/>
            <person name="Peterson A."/>
            <person name="May B."/>
            <person name="Singh S."/>
            <person name="Gebhart C."/>
            <person name="Kapur V."/>
        </authorList>
    </citation>
    <scope>NUCLEOTIDE SEQUENCE [LARGE SCALE GENOMIC DNA]</scope>
    <source>
        <strain>PHE/MN1-00</strain>
    </source>
</reference>
<feature type="chain" id="PRO_1000197204" description="Glycine--tRNA ligase beta subunit">
    <location>
        <begin position="1"/>
        <end position="695"/>
    </location>
</feature>
<keyword id="KW-0030">Aminoacyl-tRNA synthetase</keyword>
<keyword id="KW-0067">ATP-binding</keyword>
<keyword id="KW-0963">Cytoplasm</keyword>
<keyword id="KW-0436">Ligase</keyword>
<keyword id="KW-0547">Nucleotide-binding</keyword>
<keyword id="KW-0648">Protein biosynthesis</keyword>
<keyword id="KW-1185">Reference proteome</keyword>
<organism>
    <name type="scientific">Lawsonia intracellularis (strain PHE/MN1-00)</name>
    <dbReference type="NCBI Taxonomy" id="363253"/>
    <lineage>
        <taxon>Bacteria</taxon>
        <taxon>Pseudomonadati</taxon>
        <taxon>Thermodesulfobacteriota</taxon>
        <taxon>Desulfovibrionia</taxon>
        <taxon>Desulfovibrionales</taxon>
        <taxon>Desulfovibrionaceae</taxon>
        <taxon>Lawsonia</taxon>
    </lineage>
</organism>
<comment type="catalytic activity">
    <reaction evidence="1">
        <text>tRNA(Gly) + glycine + ATP = glycyl-tRNA(Gly) + AMP + diphosphate</text>
        <dbReference type="Rhea" id="RHEA:16013"/>
        <dbReference type="Rhea" id="RHEA-COMP:9664"/>
        <dbReference type="Rhea" id="RHEA-COMP:9683"/>
        <dbReference type="ChEBI" id="CHEBI:30616"/>
        <dbReference type="ChEBI" id="CHEBI:33019"/>
        <dbReference type="ChEBI" id="CHEBI:57305"/>
        <dbReference type="ChEBI" id="CHEBI:78442"/>
        <dbReference type="ChEBI" id="CHEBI:78522"/>
        <dbReference type="ChEBI" id="CHEBI:456215"/>
        <dbReference type="EC" id="6.1.1.14"/>
    </reaction>
</comment>
<comment type="subunit">
    <text evidence="1">Tetramer of two alpha and two beta subunits.</text>
</comment>
<comment type="subcellular location">
    <subcellularLocation>
        <location evidence="1">Cytoplasm</location>
    </subcellularLocation>
</comment>
<comment type="similarity">
    <text evidence="1">Belongs to the class-II aminoacyl-tRNA synthetase family.</text>
</comment>
<sequence>MATFILEIGTEELPARFLLELQSELGVRFLDSLQSMGYRPTEVSDYSTPRRLVVCIKGLDMIQPHCEEVVIGPPINIAFDKDGNPTKAAEGFAKNLGITIGSLSQISTDRGEYISGLKVKGGIPTKEVLARLCPEIITALPLPKRMRWGNNPFTFIRPIRWIMALLDSDIVPFELAGIHSNRNTVGLRNNNVPFIEVPSSTDYYMLLKEVGNVILDPNSRKDSILQLGNKEAQLIGGVVNWNERLLNEVIGLVEHPYPLLGTINSVFLNLPREVLLTSIETHQKSFGILDSQGNLLPYFLTVLNMTPPDLALVKQGWERVLQARLEDARFFWNEDINSSFDEWQEKLTHLIFLDPLGSIAQKEHRVSLLCEWIAKYIPTSNAEEARKAGSLSKVDLVSKMVEEFPELQGVMGGIYARHKGESESIATAIAEQYLPSGPDTDVPVTDLGAILSIADKIDTLVGCFGCGIIPTGTADPYGLRRCALGIIRILIEKEYPINLHQLYTRAQDNFVNVSWKLAPEDVLQKLHEFIIARLKNYFLALGYDTLVVEAIVSTQTSQLWSIKDRLDSFILLSQHEDFSQLVQTIKRVINIIKKQDKETEIVLTGHWNPSLFKDTAEKVLAEKLMIAVNKFNQESQTASLPVFMMLLKLQPAINTFFDQVMIMSNDIEVRRNRLNLLKALLLYIESLADFSVLQI</sequence>
<dbReference type="EC" id="6.1.1.14" evidence="1"/>
<dbReference type="EMBL" id="AM180252">
    <property type="protein sequence ID" value="CAJ54355.1"/>
    <property type="molecule type" value="Genomic_DNA"/>
</dbReference>
<dbReference type="RefSeq" id="WP_011526384.1">
    <property type="nucleotide sequence ID" value="NC_008011.1"/>
</dbReference>
<dbReference type="SMR" id="Q1MRM1"/>
<dbReference type="STRING" id="363253.LI0299"/>
<dbReference type="KEGG" id="lip:LI0299"/>
<dbReference type="eggNOG" id="COG0751">
    <property type="taxonomic scope" value="Bacteria"/>
</dbReference>
<dbReference type="HOGENOM" id="CLU_007220_2_2_7"/>
<dbReference type="OrthoDB" id="9775440at2"/>
<dbReference type="Proteomes" id="UP000002430">
    <property type="component" value="Chromosome"/>
</dbReference>
<dbReference type="GO" id="GO:0005829">
    <property type="term" value="C:cytosol"/>
    <property type="evidence" value="ECO:0007669"/>
    <property type="project" value="TreeGrafter"/>
</dbReference>
<dbReference type="GO" id="GO:0004814">
    <property type="term" value="F:arginine-tRNA ligase activity"/>
    <property type="evidence" value="ECO:0007669"/>
    <property type="project" value="InterPro"/>
</dbReference>
<dbReference type="GO" id="GO:0005524">
    <property type="term" value="F:ATP binding"/>
    <property type="evidence" value="ECO:0007669"/>
    <property type="project" value="UniProtKB-UniRule"/>
</dbReference>
<dbReference type="GO" id="GO:0004820">
    <property type="term" value="F:glycine-tRNA ligase activity"/>
    <property type="evidence" value="ECO:0007669"/>
    <property type="project" value="UniProtKB-UniRule"/>
</dbReference>
<dbReference type="GO" id="GO:0006420">
    <property type="term" value="P:arginyl-tRNA aminoacylation"/>
    <property type="evidence" value="ECO:0007669"/>
    <property type="project" value="InterPro"/>
</dbReference>
<dbReference type="GO" id="GO:0006426">
    <property type="term" value="P:glycyl-tRNA aminoacylation"/>
    <property type="evidence" value="ECO:0007669"/>
    <property type="project" value="UniProtKB-UniRule"/>
</dbReference>
<dbReference type="HAMAP" id="MF_00255">
    <property type="entry name" value="Gly_tRNA_synth_beta"/>
    <property type="match status" value="1"/>
</dbReference>
<dbReference type="InterPro" id="IPR008909">
    <property type="entry name" value="DALR_anticod-bd"/>
</dbReference>
<dbReference type="InterPro" id="IPR015944">
    <property type="entry name" value="Gly-tRNA-synth_bsu"/>
</dbReference>
<dbReference type="InterPro" id="IPR006194">
    <property type="entry name" value="Gly-tRNA-synth_heterodimer"/>
</dbReference>
<dbReference type="NCBIfam" id="TIGR00211">
    <property type="entry name" value="glyS"/>
    <property type="match status" value="1"/>
</dbReference>
<dbReference type="PANTHER" id="PTHR30075:SF2">
    <property type="entry name" value="GLYCINE--TRNA LIGASE, CHLOROPLASTIC_MITOCHONDRIAL 2"/>
    <property type="match status" value="1"/>
</dbReference>
<dbReference type="PANTHER" id="PTHR30075">
    <property type="entry name" value="GLYCYL-TRNA SYNTHETASE"/>
    <property type="match status" value="1"/>
</dbReference>
<dbReference type="Pfam" id="PF05746">
    <property type="entry name" value="DALR_1"/>
    <property type="match status" value="1"/>
</dbReference>
<dbReference type="Pfam" id="PF02092">
    <property type="entry name" value="tRNA_synt_2f"/>
    <property type="match status" value="1"/>
</dbReference>
<dbReference type="PRINTS" id="PR01045">
    <property type="entry name" value="TRNASYNTHGB"/>
</dbReference>
<dbReference type="SUPFAM" id="SSF109604">
    <property type="entry name" value="HD-domain/PDEase-like"/>
    <property type="match status" value="1"/>
</dbReference>
<dbReference type="PROSITE" id="PS50861">
    <property type="entry name" value="AA_TRNA_LIGASE_II_GLYAB"/>
    <property type="match status" value="1"/>
</dbReference>
<accession>Q1MRM1</accession>
<name>SYGB_LAWIP</name>
<gene>
    <name evidence="1" type="primary">glyS</name>
    <name type="ordered locus">LI0299</name>
</gene>
<proteinExistence type="inferred from homology"/>
<protein>
    <recommendedName>
        <fullName evidence="1">Glycine--tRNA ligase beta subunit</fullName>
        <ecNumber evidence="1">6.1.1.14</ecNumber>
    </recommendedName>
    <alternativeName>
        <fullName evidence="1">Glycyl-tRNA synthetase beta subunit</fullName>
        <shortName evidence="1">GlyRS</shortName>
    </alternativeName>
</protein>